<organism>
    <name type="scientific">Oleidesulfovibrio alaskensis (strain ATCC BAA-1058 / DSM 17464 / G20)</name>
    <name type="common">Desulfovibrio alaskensis</name>
    <dbReference type="NCBI Taxonomy" id="207559"/>
    <lineage>
        <taxon>Bacteria</taxon>
        <taxon>Pseudomonadati</taxon>
        <taxon>Thermodesulfobacteriota</taxon>
        <taxon>Desulfovibrionia</taxon>
        <taxon>Desulfovibrionales</taxon>
        <taxon>Desulfovibrionaceae</taxon>
        <taxon>Oleidesulfovibrio</taxon>
    </lineage>
</organism>
<protein>
    <recommendedName>
        <fullName evidence="1">Anthranilate phosphoribosyltransferase</fullName>
        <ecNumber evidence="1">2.4.2.18</ecNumber>
    </recommendedName>
</protein>
<dbReference type="EC" id="2.4.2.18" evidence="1"/>
<dbReference type="EMBL" id="CP000112">
    <property type="protein sequence ID" value="ABB40275.1"/>
    <property type="molecule type" value="Genomic_DNA"/>
</dbReference>
<dbReference type="RefSeq" id="WP_011369179.1">
    <property type="nucleotide sequence ID" value="NC_007519.1"/>
</dbReference>
<dbReference type="SMR" id="Q30VM1"/>
<dbReference type="STRING" id="207559.Dde_3482"/>
<dbReference type="KEGG" id="dde:Dde_3482"/>
<dbReference type="eggNOG" id="COG0547">
    <property type="taxonomic scope" value="Bacteria"/>
</dbReference>
<dbReference type="HOGENOM" id="CLU_034315_2_1_7"/>
<dbReference type="UniPathway" id="UPA00035">
    <property type="reaction ID" value="UER00041"/>
</dbReference>
<dbReference type="Proteomes" id="UP000002710">
    <property type="component" value="Chromosome"/>
</dbReference>
<dbReference type="GO" id="GO:0005829">
    <property type="term" value="C:cytosol"/>
    <property type="evidence" value="ECO:0007669"/>
    <property type="project" value="TreeGrafter"/>
</dbReference>
<dbReference type="GO" id="GO:0004048">
    <property type="term" value="F:anthranilate phosphoribosyltransferase activity"/>
    <property type="evidence" value="ECO:0007669"/>
    <property type="project" value="UniProtKB-UniRule"/>
</dbReference>
<dbReference type="GO" id="GO:0000287">
    <property type="term" value="F:magnesium ion binding"/>
    <property type="evidence" value="ECO:0007669"/>
    <property type="project" value="UniProtKB-UniRule"/>
</dbReference>
<dbReference type="GO" id="GO:0000162">
    <property type="term" value="P:L-tryptophan biosynthetic process"/>
    <property type="evidence" value="ECO:0007669"/>
    <property type="project" value="UniProtKB-UniRule"/>
</dbReference>
<dbReference type="FunFam" id="3.40.1030.10:FF:000002">
    <property type="entry name" value="Anthranilate phosphoribosyltransferase"/>
    <property type="match status" value="1"/>
</dbReference>
<dbReference type="Gene3D" id="3.40.1030.10">
    <property type="entry name" value="Nucleoside phosphorylase/phosphoribosyltransferase catalytic domain"/>
    <property type="match status" value="1"/>
</dbReference>
<dbReference type="Gene3D" id="1.20.970.10">
    <property type="entry name" value="Transferase, Pyrimidine Nucleoside Phosphorylase, Chain C"/>
    <property type="match status" value="1"/>
</dbReference>
<dbReference type="HAMAP" id="MF_00211">
    <property type="entry name" value="TrpD"/>
    <property type="match status" value="1"/>
</dbReference>
<dbReference type="InterPro" id="IPR005940">
    <property type="entry name" value="Anthranilate_Pribosyl_Tfrase"/>
</dbReference>
<dbReference type="InterPro" id="IPR000312">
    <property type="entry name" value="Glycosyl_Trfase_fam3"/>
</dbReference>
<dbReference type="InterPro" id="IPR017459">
    <property type="entry name" value="Glycosyl_Trfase_fam3_N_dom"/>
</dbReference>
<dbReference type="InterPro" id="IPR036320">
    <property type="entry name" value="Glycosyl_Trfase_fam3_N_dom_sf"/>
</dbReference>
<dbReference type="InterPro" id="IPR035902">
    <property type="entry name" value="Nuc_phospho_transferase"/>
</dbReference>
<dbReference type="NCBIfam" id="TIGR01245">
    <property type="entry name" value="trpD"/>
    <property type="match status" value="1"/>
</dbReference>
<dbReference type="PANTHER" id="PTHR43285">
    <property type="entry name" value="ANTHRANILATE PHOSPHORIBOSYLTRANSFERASE"/>
    <property type="match status" value="1"/>
</dbReference>
<dbReference type="PANTHER" id="PTHR43285:SF2">
    <property type="entry name" value="ANTHRANILATE PHOSPHORIBOSYLTRANSFERASE"/>
    <property type="match status" value="1"/>
</dbReference>
<dbReference type="Pfam" id="PF02885">
    <property type="entry name" value="Glycos_trans_3N"/>
    <property type="match status" value="1"/>
</dbReference>
<dbReference type="Pfam" id="PF00591">
    <property type="entry name" value="Glycos_transf_3"/>
    <property type="match status" value="1"/>
</dbReference>
<dbReference type="SUPFAM" id="SSF52418">
    <property type="entry name" value="Nucleoside phosphorylase/phosphoribosyltransferase catalytic domain"/>
    <property type="match status" value="1"/>
</dbReference>
<dbReference type="SUPFAM" id="SSF47648">
    <property type="entry name" value="Nucleoside phosphorylase/phosphoribosyltransferase N-terminal domain"/>
    <property type="match status" value="1"/>
</dbReference>
<evidence type="ECO:0000255" key="1">
    <source>
        <dbReference type="HAMAP-Rule" id="MF_00211"/>
    </source>
</evidence>
<comment type="function">
    <text evidence="1">Catalyzes the transfer of the phosphoribosyl group of 5-phosphorylribose-1-pyrophosphate (PRPP) to anthranilate to yield N-(5'-phosphoribosyl)-anthranilate (PRA).</text>
</comment>
<comment type="catalytic activity">
    <reaction evidence="1">
        <text>N-(5-phospho-beta-D-ribosyl)anthranilate + diphosphate = 5-phospho-alpha-D-ribose 1-diphosphate + anthranilate</text>
        <dbReference type="Rhea" id="RHEA:11768"/>
        <dbReference type="ChEBI" id="CHEBI:16567"/>
        <dbReference type="ChEBI" id="CHEBI:18277"/>
        <dbReference type="ChEBI" id="CHEBI:33019"/>
        <dbReference type="ChEBI" id="CHEBI:58017"/>
        <dbReference type="EC" id="2.4.2.18"/>
    </reaction>
</comment>
<comment type="cofactor">
    <cofactor evidence="1">
        <name>Mg(2+)</name>
        <dbReference type="ChEBI" id="CHEBI:18420"/>
    </cofactor>
    <text evidence="1">Binds 2 magnesium ions per monomer.</text>
</comment>
<comment type="pathway">
    <text evidence="1">Amino-acid biosynthesis; L-tryptophan biosynthesis; L-tryptophan from chorismate: step 2/5.</text>
</comment>
<comment type="subunit">
    <text evidence="1">Homodimer.</text>
</comment>
<comment type="similarity">
    <text evidence="1">Belongs to the anthranilate phosphoribosyltransferase family.</text>
</comment>
<reference key="1">
    <citation type="journal article" date="2011" name="J. Bacteriol.">
        <title>Complete genome sequence and updated annotation of Desulfovibrio alaskensis G20.</title>
        <authorList>
            <person name="Hauser L.J."/>
            <person name="Land M.L."/>
            <person name="Brown S.D."/>
            <person name="Larimer F."/>
            <person name="Keller K.L."/>
            <person name="Rapp-Giles B.J."/>
            <person name="Price M.N."/>
            <person name="Lin M."/>
            <person name="Bruce D.C."/>
            <person name="Detter J.C."/>
            <person name="Tapia R."/>
            <person name="Han C.S."/>
            <person name="Goodwin L.A."/>
            <person name="Cheng J.F."/>
            <person name="Pitluck S."/>
            <person name="Copeland A."/>
            <person name="Lucas S."/>
            <person name="Nolan M."/>
            <person name="Lapidus A.L."/>
            <person name="Palumbo A.V."/>
            <person name="Wall J.D."/>
        </authorList>
    </citation>
    <scope>NUCLEOTIDE SEQUENCE [LARGE SCALE GENOMIC DNA]</scope>
    <source>
        <strain>ATCC BAA-1058 / DSM 17464 / G20</strain>
    </source>
</reference>
<keyword id="KW-0028">Amino-acid biosynthesis</keyword>
<keyword id="KW-0057">Aromatic amino acid biosynthesis</keyword>
<keyword id="KW-0328">Glycosyltransferase</keyword>
<keyword id="KW-0460">Magnesium</keyword>
<keyword id="KW-0479">Metal-binding</keyword>
<keyword id="KW-1185">Reference proteome</keyword>
<keyword id="KW-0808">Transferase</keyword>
<keyword id="KW-0822">Tryptophan biosynthesis</keyword>
<sequence length="331" mass="34906">MHTAEILETLASGGVLPPETAHMAFDRLMSGEMTPAQAGSFLMGLRSHGETPELVASAVRAALAHARLIQGLEYDRIDIVGTGGDGRNSFNCSTAAALTLAGMGYKVVKHGNRAVSSTSGSADVVEGLGLPLETAPEDVPVLLARHNFVFLFAPFYHPAFRHVMPVRRDLGIRTLFNVLGPLLNPARPTRMLLGVAKPAMLHTMADALLLTGVRRAAVVHGAGGYDELTTMGPARVVMVRDGATEEMEINPADHGFAPCTPAQLEVHDRQEALEVMRLLLAGEGPAPMLDMMAFNAGLAVYLMEDSMPISAAMARARQAVAGGAGGKVLDA</sequence>
<gene>
    <name evidence="1" type="primary">trpD</name>
    <name type="ordered locus">Dde_3482</name>
</gene>
<accession>Q30VM1</accession>
<proteinExistence type="inferred from homology"/>
<name>TRPD_OLEA2</name>
<feature type="chain" id="PRO_1000204181" description="Anthranilate phosphoribosyltransferase">
    <location>
        <begin position="1"/>
        <end position="331"/>
    </location>
</feature>
<feature type="binding site" evidence="1">
    <location>
        <position position="81"/>
    </location>
    <ligand>
        <name>5-phospho-alpha-D-ribose 1-diphosphate</name>
        <dbReference type="ChEBI" id="CHEBI:58017"/>
    </ligand>
</feature>
<feature type="binding site" evidence="1">
    <location>
        <position position="81"/>
    </location>
    <ligand>
        <name>anthranilate</name>
        <dbReference type="ChEBI" id="CHEBI:16567"/>
        <label>1</label>
    </ligand>
</feature>
<feature type="binding site" evidence="1">
    <location>
        <begin position="84"/>
        <end position="85"/>
    </location>
    <ligand>
        <name>5-phospho-alpha-D-ribose 1-diphosphate</name>
        <dbReference type="ChEBI" id="CHEBI:58017"/>
    </ligand>
</feature>
<feature type="binding site" evidence="1">
    <location>
        <position position="89"/>
    </location>
    <ligand>
        <name>5-phospho-alpha-D-ribose 1-diphosphate</name>
        <dbReference type="ChEBI" id="CHEBI:58017"/>
    </ligand>
</feature>
<feature type="binding site" evidence="1">
    <location>
        <begin position="91"/>
        <end position="94"/>
    </location>
    <ligand>
        <name>5-phospho-alpha-D-ribose 1-diphosphate</name>
        <dbReference type="ChEBI" id="CHEBI:58017"/>
    </ligand>
</feature>
<feature type="binding site" evidence="1">
    <location>
        <position position="93"/>
    </location>
    <ligand>
        <name>Mg(2+)</name>
        <dbReference type="ChEBI" id="CHEBI:18420"/>
        <label>1</label>
    </ligand>
</feature>
<feature type="binding site" evidence="1">
    <location>
        <begin position="109"/>
        <end position="117"/>
    </location>
    <ligand>
        <name>5-phospho-alpha-D-ribose 1-diphosphate</name>
        <dbReference type="ChEBI" id="CHEBI:58017"/>
    </ligand>
</feature>
<feature type="binding site" evidence="1">
    <location>
        <position position="112"/>
    </location>
    <ligand>
        <name>anthranilate</name>
        <dbReference type="ChEBI" id="CHEBI:16567"/>
        <label>1</label>
    </ligand>
</feature>
<feature type="binding site" evidence="1">
    <location>
        <position position="121"/>
    </location>
    <ligand>
        <name>5-phospho-alpha-D-ribose 1-diphosphate</name>
        <dbReference type="ChEBI" id="CHEBI:58017"/>
    </ligand>
</feature>
<feature type="binding site" evidence="1">
    <location>
        <position position="167"/>
    </location>
    <ligand>
        <name>anthranilate</name>
        <dbReference type="ChEBI" id="CHEBI:16567"/>
        <label>2</label>
    </ligand>
</feature>
<feature type="binding site" evidence="1">
    <location>
        <position position="226"/>
    </location>
    <ligand>
        <name>Mg(2+)</name>
        <dbReference type="ChEBI" id="CHEBI:18420"/>
        <label>2</label>
    </ligand>
</feature>
<feature type="binding site" evidence="1">
    <location>
        <position position="227"/>
    </location>
    <ligand>
        <name>Mg(2+)</name>
        <dbReference type="ChEBI" id="CHEBI:18420"/>
        <label>1</label>
    </ligand>
</feature>
<feature type="binding site" evidence="1">
    <location>
        <position position="227"/>
    </location>
    <ligand>
        <name>Mg(2+)</name>
        <dbReference type="ChEBI" id="CHEBI:18420"/>
        <label>2</label>
    </ligand>
</feature>